<accession>P67241</accession>
<accession>A0A1R3XVX9</accession>
<accession>P96914</accession>
<accession>X2BFK5</accession>
<sequence length="131" mass="14250">MVIDTSALVAMLSDEPDAERFEAAVEADHIRLMSTASYLETALVIEARFGEPGGRELDLWLHRAAVDLVAVHADQADAARAAYRTYGKGRHRAGLNYGDCFSYGLAKISGQPLLFKGEDFQHTDIATVALP</sequence>
<keyword id="KW-0378">Hydrolase</keyword>
<keyword id="KW-0460">Magnesium</keyword>
<keyword id="KW-0479">Metal-binding</keyword>
<keyword id="KW-0540">Nuclease</keyword>
<keyword id="KW-1185">Reference proteome</keyword>
<keyword id="KW-1277">Toxin-antitoxin system</keyword>
<gene>
    <name type="ordered locus">BQ2027_MB0640</name>
</gene>
<evidence type="ECO:0000255" key="1">
    <source>
        <dbReference type="HAMAP-Rule" id="MF_00265"/>
    </source>
</evidence>
<proteinExistence type="inferred from homology"/>
<organism>
    <name type="scientific">Mycobacterium bovis (strain ATCC BAA-935 / AF2122/97)</name>
    <dbReference type="NCBI Taxonomy" id="233413"/>
    <lineage>
        <taxon>Bacteria</taxon>
        <taxon>Bacillati</taxon>
        <taxon>Actinomycetota</taxon>
        <taxon>Actinomycetes</taxon>
        <taxon>Mycobacteriales</taxon>
        <taxon>Mycobacteriaceae</taxon>
        <taxon>Mycobacterium</taxon>
        <taxon>Mycobacterium tuberculosis complex</taxon>
    </lineage>
</organism>
<protein>
    <recommendedName>
        <fullName>VapC ribonuclease Mb0640</fullName>
        <shortName>RNase Mb0640</shortName>
        <ecNumber evidence="1">3.1.-.-</ecNumber>
    </recommendedName>
    <alternativeName>
        <fullName>Toxin Mb0640</fullName>
    </alternativeName>
</protein>
<reference key="1">
    <citation type="journal article" date="2003" name="Proc. Natl. Acad. Sci. U.S.A.">
        <title>The complete genome sequence of Mycobacterium bovis.</title>
        <authorList>
            <person name="Garnier T."/>
            <person name="Eiglmeier K."/>
            <person name="Camus J.-C."/>
            <person name="Medina N."/>
            <person name="Mansoor H."/>
            <person name="Pryor M."/>
            <person name="Duthoy S."/>
            <person name="Grondin S."/>
            <person name="Lacroix C."/>
            <person name="Monsempe C."/>
            <person name="Simon S."/>
            <person name="Harris B."/>
            <person name="Atkin R."/>
            <person name="Doggett J."/>
            <person name="Mayes R."/>
            <person name="Keating L."/>
            <person name="Wheeler P.R."/>
            <person name="Parkhill J."/>
            <person name="Barrell B.G."/>
            <person name="Cole S.T."/>
            <person name="Gordon S.V."/>
            <person name="Hewinson R.G."/>
        </authorList>
    </citation>
    <scope>NUCLEOTIDE SEQUENCE [LARGE SCALE GENOMIC DNA]</scope>
    <source>
        <strain>ATCC BAA-935 / AF2122/97</strain>
    </source>
</reference>
<reference key="2">
    <citation type="journal article" date="2017" name="Genome Announc.">
        <title>Updated reference genome sequence and annotation of Mycobacterium bovis AF2122/97.</title>
        <authorList>
            <person name="Malone K.M."/>
            <person name="Farrell D."/>
            <person name="Stuber T.P."/>
            <person name="Schubert O.T."/>
            <person name="Aebersold R."/>
            <person name="Robbe-Austerman S."/>
            <person name="Gordon S.V."/>
        </authorList>
    </citation>
    <scope>NUCLEOTIDE SEQUENCE [LARGE SCALE GENOMIC DNA]</scope>
    <scope>GENOME REANNOTATION</scope>
    <source>
        <strain>ATCC BAA-935 / AF2122/97</strain>
    </source>
</reference>
<comment type="function">
    <text evidence="1">Toxic component of a type II toxin-antitoxin (TA) system. An RNase.</text>
</comment>
<comment type="cofactor">
    <cofactor evidence="1">
        <name>Mg(2+)</name>
        <dbReference type="ChEBI" id="CHEBI:18420"/>
    </cofactor>
</comment>
<comment type="similarity">
    <text evidence="1">Belongs to the PINc/VapC protein family.</text>
</comment>
<dbReference type="EC" id="3.1.-.-" evidence="1"/>
<dbReference type="EMBL" id="LT708304">
    <property type="protein sequence ID" value="SIT99238.1"/>
    <property type="molecule type" value="Genomic_DNA"/>
</dbReference>
<dbReference type="RefSeq" id="NP_854299.1">
    <property type="nucleotide sequence ID" value="NC_002945.3"/>
</dbReference>
<dbReference type="SMR" id="P67241"/>
<dbReference type="KEGG" id="mbo:BQ2027_MB0640"/>
<dbReference type="PATRIC" id="fig|233413.5.peg.700"/>
<dbReference type="Proteomes" id="UP000001419">
    <property type="component" value="Chromosome"/>
</dbReference>
<dbReference type="GO" id="GO:0000287">
    <property type="term" value="F:magnesium ion binding"/>
    <property type="evidence" value="ECO:0007669"/>
    <property type="project" value="UniProtKB-UniRule"/>
</dbReference>
<dbReference type="GO" id="GO:0004540">
    <property type="term" value="F:RNA nuclease activity"/>
    <property type="evidence" value="ECO:0007669"/>
    <property type="project" value="InterPro"/>
</dbReference>
<dbReference type="CDD" id="cd09871">
    <property type="entry name" value="PIN_MtVapC28-VapC30-like"/>
    <property type="match status" value="1"/>
</dbReference>
<dbReference type="Gene3D" id="3.40.50.1010">
    <property type="entry name" value="5'-nuclease"/>
    <property type="match status" value="1"/>
</dbReference>
<dbReference type="HAMAP" id="MF_00265">
    <property type="entry name" value="VapC_Nob1"/>
    <property type="match status" value="1"/>
</dbReference>
<dbReference type="InterPro" id="IPR029060">
    <property type="entry name" value="PIN-like_dom_sf"/>
</dbReference>
<dbReference type="InterPro" id="IPR002716">
    <property type="entry name" value="PIN_dom"/>
</dbReference>
<dbReference type="InterPro" id="IPR050556">
    <property type="entry name" value="Type_II_TA_system_RNase"/>
</dbReference>
<dbReference type="InterPro" id="IPR022907">
    <property type="entry name" value="VapC_family"/>
</dbReference>
<dbReference type="PANTHER" id="PTHR33653">
    <property type="entry name" value="RIBONUCLEASE VAPC2"/>
    <property type="match status" value="1"/>
</dbReference>
<dbReference type="PANTHER" id="PTHR33653:SF1">
    <property type="entry name" value="RIBONUCLEASE VAPC2"/>
    <property type="match status" value="1"/>
</dbReference>
<dbReference type="Pfam" id="PF01850">
    <property type="entry name" value="PIN"/>
    <property type="match status" value="1"/>
</dbReference>
<dbReference type="SUPFAM" id="SSF88723">
    <property type="entry name" value="PIN domain-like"/>
    <property type="match status" value="1"/>
</dbReference>
<name>VAPC2_MYCBO</name>
<feature type="chain" id="PRO_0000221200" description="VapC ribonuclease Mb0640">
    <location>
        <begin position="1"/>
        <end position="131"/>
    </location>
</feature>
<feature type="domain" description="PINc" evidence="1">
    <location>
        <begin position="1"/>
        <end position="129"/>
    </location>
</feature>
<feature type="binding site" evidence="1">
    <location>
        <position position="4"/>
    </location>
    <ligand>
        <name>Mg(2+)</name>
        <dbReference type="ChEBI" id="CHEBI:18420"/>
    </ligand>
</feature>
<feature type="binding site" evidence="1">
    <location>
        <position position="99"/>
    </location>
    <ligand>
        <name>Mg(2+)</name>
        <dbReference type="ChEBI" id="CHEBI:18420"/>
    </ligand>
</feature>